<name>FOLD_HALOH</name>
<evidence type="ECO:0000255" key="1">
    <source>
        <dbReference type="HAMAP-Rule" id="MF_01576"/>
    </source>
</evidence>
<feature type="chain" id="PRO_1000185616" description="Bifunctional protein FolD">
    <location>
        <begin position="1"/>
        <end position="283"/>
    </location>
</feature>
<feature type="binding site" evidence="1">
    <location>
        <begin position="166"/>
        <end position="168"/>
    </location>
    <ligand>
        <name>NADP(+)</name>
        <dbReference type="ChEBI" id="CHEBI:58349"/>
    </ligand>
</feature>
<feature type="binding site" evidence="1">
    <location>
        <position position="191"/>
    </location>
    <ligand>
        <name>NADP(+)</name>
        <dbReference type="ChEBI" id="CHEBI:58349"/>
    </ligand>
</feature>
<feature type="binding site" evidence="1">
    <location>
        <position position="232"/>
    </location>
    <ligand>
        <name>NADP(+)</name>
        <dbReference type="ChEBI" id="CHEBI:58349"/>
    </ligand>
</feature>
<comment type="function">
    <text evidence="1">Catalyzes the oxidation of 5,10-methylenetetrahydrofolate to 5,10-methenyltetrahydrofolate and then the hydrolysis of 5,10-methenyltetrahydrofolate to 10-formyltetrahydrofolate.</text>
</comment>
<comment type="catalytic activity">
    <reaction evidence="1">
        <text>(6R)-5,10-methylene-5,6,7,8-tetrahydrofolate + NADP(+) = (6R)-5,10-methenyltetrahydrofolate + NADPH</text>
        <dbReference type="Rhea" id="RHEA:22812"/>
        <dbReference type="ChEBI" id="CHEBI:15636"/>
        <dbReference type="ChEBI" id="CHEBI:57455"/>
        <dbReference type="ChEBI" id="CHEBI:57783"/>
        <dbReference type="ChEBI" id="CHEBI:58349"/>
        <dbReference type="EC" id="1.5.1.5"/>
    </reaction>
</comment>
<comment type="catalytic activity">
    <reaction evidence="1">
        <text>(6R)-5,10-methenyltetrahydrofolate + H2O = (6R)-10-formyltetrahydrofolate + H(+)</text>
        <dbReference type="Rhea" id="RHEA:23700"/>
        <dbReference type="ChEBI" id="CHEBI:15377"/>
        <dbReference type="ChEBI" id="CHEBI:15378"/>
        <dbReference type="ChEBI" id="CHEBI:57455"/>
        <dbReference type="ChEBI" id="CHEBI:195366"/>
        <dbReference type="EC" id="3.5.4.9"/>
    </reaction>
</comment>
<comment type="pathway">
    <text evidence="1">One-carbon metabolism; tetrahydrofolate interconversion.</text>
</comment>
<comment type="subunit">
    <text evidence="1">Homodimer.</text>
</comment>
<comment type="similarity">
    <text evidence="1">Belongs to the tetrahydrofolate dehydrogenase/cyclohydrolase family.</text>
</comment>
<keyword id="KW-0028">Amino-acid biosynthesis</keyword>
<keyword id="KW-0368">Histidine biosynthesis</keyword>
<keyword id="KW-0378">Hydrolase</keyword>
<keyword id="KW-0486">Methionine biosynthesis</keyword>
<keyword id="KW-0511">Multifunctional enzyme</keyword>
<keyword id="KW-0521">NADP</keyword>
<keyword id="KW-0554">One-carbon metabolism</keyword>
<keyword id="KW-0560">Oxidoreductase</keyword>
<keyword id="KW-0658">Purine biosynthesis</keyword>
<keyword id="KW-1185">Reference proteome</keyword>
<accession>B8D2H8</accession>
<protein>
    <recommendedName>
        <fullName evidence="1">Bifunctional protein FolD</fullName>
    </recommendedName>
    <domain>
        <recommendedName>
            <fullName evidence="1">Methylenetetrahydrofolate dehydrogenase</fullName>
            <ecNumber evidence="1">1.5.1.5</ecNumber>
        </recommendedName>
    </domain>
    <domain>
        <recommendedName>
            <fullName evidence="1">Methenyltetrahydrofolate cyclohydrolase</fullName>
            <ecNumber evidence="1">3.5.4.9</ecNumber>
        </recommendedName>
    </domain>
</protein>
<organism>
    <name type="scientific">Halothermothrix orenii (strain H 168 / OCM 544 / DSM 9562)</name>
    <dbReference type="NCBI Taxonomy" id="373903"/>
    <lineage>
        <taxon>Bacteria</taxon>
        <taxon>Bacillati</taxon>
        <taxon>Bacillota</taxon>
        <taxon>Clostridia</taxon>
        <taxon>Halanaerobiales</taxon>
        <taxon>Halothermotrichaceae</taxon>
        <taxon>Halothermothrix</taxon>
    </lineage>
</organism>
<proteinExistence type="inferred from homology"/>
<dbReference type="EC" id="1.5.1.5" evidence="1"/>
<dbReference type="EC" id="3.5.4.9" evidence="1"/>
<dbReference type="EMBL" id="CP001098">
    <property type="protein sequence ID" value="ACL69405.1"/>
    <property type="molecule type" value="Genomic_DNA"/>
</dbReference>
<dbReference type="RefSeq" id="WP_012635593.1">
    <property type="nucleotide sequence ID" value="NC_011899.1"/>
</dbReference>
<dbReference type="SMR" id="B8D2H8"/>
<dbReference type="STRING" id="373903.Hore_06480"/>
<dbReference type="KEGG" id="hor:Hore_06480"/>
<dbReference type="eggNOG" id="COG0190">
    <property type="taxonomic scope" value="Bacteria"/>
</dbReference>
<dbReference type="HOGENOM" id="CLU_034045_2_1_9"/>
<dbReference type="OrthoDB" id="9803580at2"/>
<dbReference type="UniPathway" id="UPA00193"/>
<dbReference type="Proteomes" id="UP000000719">
    <property type="component" value="Chromosome"/>
</dbReference>
<dbReference type="GO" id="GO:0005829">
    <property type="term" value="C:cytosol"/>
    <property type="evidence" value="ECO:0007669"/>
    <property type="project" value="TreeGrafter"/>
</dbReference>
<dbReference type="GO" id="GO:0004477">
    <property type="term" value="F:methenyltetrahydrofolate cyclohydrolase activity"/>
    <property type="evidence" value="ECO:0007669"/>
    <property type="project" value="UniProtKB-UniRule"/>
</dbReference>
<dbReference type="GO" id="GO:0004488">
    <property type="term" value="F:methylenetetrahydrofolate dehydrogenase (NADP+) activity"/>
    <property type="evidence" value="ECO:0007669"/>
    <property type="project" value="UniProtKB-UniRule"/>
</dbReference>
<dbReference type="GO" id="GO:0000105">
    <property type="term" value="P:L-histidine biosynthetic process"/>
    <property type="evidence" value="ECO:0007669"/>
    <property type="project" value="UniProtKB-KW"/>
</dbReference>
<dbReference type="GO" id="GO:0009086">
    <property type="term" value="P:methionine biosynthetic process"/>
    <property type="evidence" value="ECO:0007669"/>
    <property type="project" value="UniProtKB-KW"/>
</dbReference>
<dbReference type="GO" id="GO:0006164">
    <property type="term" value="P:purine nucleotide biosynthetic process"/>
    <property type="evidence" value="ECO:0007669"/>
    <property type="project" value="UniProtKB-KW"/>
</dbReference>
<dbReference type="GO" id="GO:0035999">
    <property type="term" value="P:tetrahydrofolate interconversion"/>
    <property type="evidence" value="ECO:0007669"/>
    <property type="project" value="UniProtKB-UniRule"/>
</dbReference>
<dbReference type="CDD" id="cd01080">
    <property type="entry name" value="NAD_bind_m-THF_DH_Cyclohyd"/>
    <property type="match status" value="1"/>
</dbReference>
<dbReference type="FunFam" id="3.40.50.10860:FF:000001">
    <property type="entry name" value="Bifunctional protein FolD"/>
    <property type="match status" value="1"/>
</dbReference>
<dbReference type="FunFam" id="3.40.50.720:FF:000006">
    <property type="entry name" value="Bifunctional protein FolD"/>
    <property type="match status" value="1"/>
</dbReference>
<dbReference type="Gene3D" id="3.40.50.10860">
    <property type="entry name" value="Leucine Dehydrogenase, chain A, domain 1"/>
    <property type="match status" value="1"/>
</dbReference>
<dbReference type="Gene3D" id="3.40.50.720">
    <property type="entry name" value="NAD(P)-binding Rossmann-like Domain"/>
    <property type="match status" value="1"/>
</dbReference>
<dbReference type="HAMAP" id="MF_01576">
    <property type="entry name" value="THF_DHG_CYH"/>
    <property type="match status" value="1"/>
</dbReference>
<dbReference type="InterPro" id="IPR046346">
    <property type="entry name" value="Aminoacid_DH-like_N_sf"/>
</dbReference>
<dbReference type="InterPro" id="IPR036291">
    <property type="entry name" value="NAD(P)-bd_dom_sf"/>
</dbReference>
<dbReference type="InterPro" id="IPR000672">
    <property type="entry name" value="THF_DH/CycHdrlase"/>
</dbReference>
<dbReference type="InterPro" id="IPR020630">
    <property type="entry name" value="THF_DH/CycHdrlase_cat_dom"/>
</dbReference>
<dbReference type="InterPro" id="IPR020867">
    <property type="entry name" value="THF_DH/CycHdrlase_CS"/>
</dbReference>
<dbReference type="InterPro" id="IPR020631">
    <property type="entry name" value="THF_DH/CycHdrlase_NAD-bd_dom"/>
</dbReference>
<dbReference type="NCBIfam" id="NF008058">
    <property type="entry name" value="PRK10792.1"/>
    <property type="match status" value="1"/>
</dbReference>
<dbReference type="NCBIfam" id="NF010783">
    <property type="entry name" value="PRK14186.1"/>
    <property type="match status" value="1"/>
</dbReference>
<dbReference type="PANTHER" id="PTHR48099:SF5">
    <property type="entry name" value="C-1-TETRAHYDROFOLATE SYNTHASE, CYTOPLASMIC"/>
    <property type="match status" value="1"/>
</dbReference>
<dbReference type="PANTHER" id="PTHR48099">
    <property type="entry name" value="C-1-TETRAHYDROFOLATE SYNTHASE, CYTOPLASMIC-RELATED"/>
    <property type="match status" value="1"/>
</dbReference>
<dbReference type="Pfam" id="PF00763">
    <property type="entry name" value="THF_DHG_CYH"/>
    <property type="match status" value="1"/>
</dbReference>
<dbReference type="Pfam" id="PF02882">
    <property type="entry name" value="THF_DHG_CYH_C"/>
    <property type="match status" value="1"/>
</dbReference>
<dbReference type="PRINTS" id="PR00085">
    <property type="entry name" value="THFDHDRGNASE"/>
</dbReference>
<dbReference type="SUPFAM" id="SSF53223">
    <property type="entry name" value="Aminoacid dehydrogenase-like, N-terminal domain"/>
    <property type="match status" value="1"/>
</dbReference>
<dbReference type="SUPFAM" id="SSF51735">
    <property type="entry name" value="NAD(P)-binding Rossmann-fold domains"/>
    <property type="match status" value="1"/>
</dbReference>
<dbReference type="PROSITE" id="PS00766">
    <property type="entry name" value="THF_DHG_CYH_1"/>
    <property type="match status" value="1"/>
</dbReference>
<dbReference type="PROSITE" id="PS00767">
    <property type="entry name" value="THF_DHG_CYH_2"/>
    <property type="match status" value="1"/>
</dbReference>
<gene>
    <name evidence="1" type="primary">folD</name>
    <name type="ordered locus">Hore_06480</name>
</gene>
<reference key="1">
    <citation type="journal article" date="2009" name="PLoS ONE">
        <title>Genome analysis of the anaerobic thermohalophilic bacterium Halothermothrix orenii.</title>
        <authorList>
            <person name="Mavromatis K."/>
            <person name="Ivanova N."/>
            <person name="Anderson I."/>
            <person name="Lykidis A."/>
            <person name="Hooper S.D."/>
            <person name="Sun H."/>
            <person name="Kunin V."/>
            <person name="Lapidus A."/>
            <person name="Hugenholtz P."/>
            <person name="Patel B."/>
            <person name="Kyrpides N.C."/>
        </authorList>
    </citation>
    <scope>NUCLEOTIDE SEQUENCE [LARGE SCALE GENOMIC DNA]</scope>
    <source>
        <strain>H 168 / OCM 544 / DSM 9562</strain>
    </source>
</reference>
<sequence length="283" mass="30801">MGKIIDGKKIASEIRNELKEEVKKFTEEGRPPGLSVVLVGDDPASRTYVRMKEKVAKEIGIYSKVDYLSRQTTQDELLDIVDKLNNDEKIDGILVQLPLPDHIDEKAVIEAISPFKDVDGFHPINTGKLFSGMTGQRFEACTPLGIIELLDREGIEIDGKKAVVVGRSNIVGKPVAHLLLERHATVTVCHSHTADLGIETRQADILVVAAGRPKLVKGEMVKEGAAVIDVGTNRVDGHLVGDVDFEAARQRAGYITPVPGGVGPMTIAMLMKNTVKARKYHGV</sequence>